<proteinExistence type="inferred from homology"/>
<dbReference type="EC" id="3.5.1.5" evidence="1"/>
<dbReference type="EMBL" id="CP000569">
    <property type="protein sequence ID" value="ABN74701.1"/>
    <property type="molecule type" value="Genomic_DNA"/>
</dbReference>
<dbReference type="RefSeq" id="WP_005602348.1">
    <property type="nucleotide sequence ID" value="NC_009053.1"/>
</dbReference>
<dbReference type="SMR" id="A3N2R5"/>
<dbReference type="STRING" id="416269.APL_1617"/>
<dbReference type="EnsemblBacteria" id="ABN74701">
    <property type="protein sequence ID" value="ABN74701"/>
    <property type="gene ID" value="APL_1617"/>
</dbReference>
<dbReference type="KEGG" id="apl:APL_1617"/>
<dbReference type="eggNOG" id="COG0832">
    <property type="taxonomic scope" value="Bacteria"/>
</dbReference>
<dbReference type="HOGENOM" id="CLU_129707_1_1_6"/>
<dbReference type="UniPathway" id="UPA00258">
    <property type="reaction ID" value="UER00370"/>
</dbReference>
<dbReference type="Proteomes" id="UP000001432">
    <property type="component" value="Chromosome"/>
</dbReference>
<dbReference type="GO" id="GO:0035550">
    <property type="term" value="C:urease complex"/>
    <property type="evidence" value="ECO:0007669"/>
    <property type="project" value="InterPro"/>
</dbReference>
<dbReference type="GO" id="GO:0009039">
    <property type="term" value="F:urease activity"/>
    <property type="evidence" value="ECO:0007669"/>
    <property type="project" value="UniProtKB-UniRule"/>
</dbReference>
<dbReference type="GO" id="GO:0043419">
    <property type="term" value="P:urea catabolic process"/>
    <property type="evidence" value="ECO:0007669"/>
    <property type="project" value="UniProtKB-UniRule"/>
</dbReference>
<dbReference type="CDD" id="cd00407">
    <property type="entry name" value="Urease_beta"/>
    <property type="match status" value="1"/>
</dbReference>
<dbReference type="FunFam" id="2.10.150.10:FF:000001">
    <property type="entry name" value="Urease subunit beta"/>
    <property type="match status" value="1"/>
</dbReference>
<dbReference type="Gene3D" id="2.10.150.10">
    <property type="entry name" value="Urease, beta subunit"/>
    <property type="match status" value="1"/>
</dbReference>
<dbReference type="HAMAP" id="MF_01954">
    <property type="entry name" value="Urease_beta"/>
    <property type="match status" value="1"/>
</dbReference>
<dbReference type="InterPro" id="IPR002019">
    <property type="entry name" value="Urease_beta-like"/>
</dbReference>
<dbReference type="InterPro" id="IPR036461">
    <property type="entry name" value="Urease_betasu_sf"/>
</dbReference>
<dbReference type="InterPro" id="IPR050069">
    <property type="entry name" value="Urease_subunit"/>
</dbReference>
<dbReference type="NCBIfam" id="NF009682">
    <property type="entry name" value="PRK13203.1"/>
    <property type="match status" value="1"/>
</dbReference>
<dbReference type="NCBIfam" id="TIGR00192">
    <property type="entry name" value="urease_beta"/>
    <property type="match status" value="1"/>
</dbReference>
<dbReference type="PANTHER" id="PTHR33569">
    <property type="entry name" value="UREASE"/>
    <property type="match status" value="1"/>
</dbReference>
<dbReference type="PANTHER" id="PTHR33569:SF1">
    <property type="entry name" value="UREASE"/>
    <property type="match status" value="1"/>
</dbReference>
<dbReference type="Pfam" id="PF00699">
    <property type="entry name" value="Urease_beta"/>
    <property type="match status" value="1"/>
</dbReference>
<dbReference type="SUPFAM" id="SSF51278">
    <property type="entry name" value="Urease, beta-subunit"/>
    <property type="match status" value="1"/>
</dbReference>
<protein>
    <recommendedName>
        <fullName evidence="1">Urease subunit beta</fullName>
        <ecNumber evidence="1">3.5.1.5</ecNumber>
    </recommendedName>
    <alternativeName>
        <fullName evidence="1">Urea amidohydrolase subunit beta</fullName>
    </alternativeName>
</protein>
<organism>
    <name type="scientific">Actinobacillus pleuropneumoniae serotype 5b (strain L20)</name>
    <dbReference type="NCBI Taxonomy" id="416269"/>
    <lineage>
        <taxon>Bacteria</taxon>
        <taxon>Pseudomonadati</taxon>
        <taxon>Pseudomonadota</taxon>
        <taxon>Gammaproteobacteria</taxon>
        <taxon>Pasteurellales</taxon>
        <taxon>Pasteurellaceae</taxon>
        <taxon>Actinobacillus</taxon>
    </lineage>
</organism>
<keyword id="KW-0963">Cytoplasm</keyword>
<keyword id="KW-0378">Hydrolase</keyword>
<keyword id="KW-1185">Reference proteome</keyword>
<accession>A3N2R5</accession>
<sequence>MIPGEYQLADGDIQANVGRKTVKLEVVNTGDRPIQVGSHYHFFETNHALKFDRLQARGMRLNVPSGNAVRFEPGEAKEVELVEFGGNKVIYGFHNEIDGKL</sequence>
<gene>
    <name evidence="1" type="primary">ureB</name>
    <name type="ordered locus">APL_1617</name>
</gene>
<comment type="catalytic activity">
    <reaction evidence="1">
        <text>urea + 2 H2O + H(+) = hydrogencarbonate + 2 NH4(+)</text>
        <dbReference type="Rhea" id="RHEA:20557"/>
        <dbReference type="ChEBI" id="CHEBI:15377"/>
        <dbReference type="ChEBI" id="CHEBI:15378"/>
        <dbReference type="ChEBI" id="CHEBI:16199"/>
        <dbReference type="ChEBI" id="CHEBI:17544"/>
        <dbReference type="ChEBI" id="CHEBI:28938"/>
        <dbReference type="EC" id="3.5.1.5"/>
    </reaction>
</comment>
<comment type="pathway">
    <text evidence="1">Nitrogen metabolism; urea degradation; CO(2) and NH(3) from urea (urease route): step 1/1.</text>
</comment>
<comment type="subunit">
    <text evidence="1">Heterotrimer of UreA (gamma), UreB (beta) and UreC (alpha) subunits. Three heterotrimers associate to form the active enzyme.</text>
</comment>
<comment type="subcellular location">
    <subcellularLocation>
        <location evidence="1">Cytoplasm</location>
    </subcellularLocation>
</comment>
<comment type="similarity">
    <text evidence="1">Belongs to the urease beta subunit family.</text>
</comment>
<evidence type="ECO:0000255" key="1">
    <source>
        <dbReference type="HAMAP-Rule" id="MF_01954"/>
    </source>
</evidence>
<feature type="chain" id="PRO_1000070710" description="Urease subunit beta">
    <location>
        <begin position="1"/>
        <end position="101"/>
    </location>
</feature>
<reference key="1">
    <citation type="journal article" date="2008" name="J. Bacteriol.">
        <title>The complete genome sequence of Actinobacillus pleuropneumoniae L20 (serotype 5b).</title>
        <authorList>
            <person name="Foote S.J."/>
            <person name="Bosse J.T."/>
            <person name="Bouevitch A.B."/>
            <person name="Langford P.R."/>
            <person name="Young N.M."/>
            <person name="Nash J.H.E."/>
        </authorList>
    </citation>
    <scope>NUCLEOTIDE SEQUENCE [LARGE SCALE GENOMIC DNA]</scope>
    <source>
        <strain>L20</strain>
    </source>
</reference>
<name>URE2_ACTP2</name>